<dbReference type="EMBL" id="AP006714">
    <property type="protein sequence ID" value="BAD27337.1"/>
    <property type="molecule type" value="Genomic_DNA"/>
</dbReference>
<dbReference type="EMBL" id="AP006714">
    <property type="protein sequence ID" value="BAD27383.1"/>
    <property type="molecule type" value="Genomic_DNA"/>
</dbReference>
<dbReference type="SMR" id="Q6ENR9"/>
<dbReference type="GO" id="GO:0009507">
    <property type="term" value="C:chloroplast"/>
    <property type="evidence" value="ECO:0007669"/>
    <property type="project" value="UniProtKB-SubCell"/>
</dbReference>
<dbReference type="GO" id="GO:1990904">
    <property type="term" value="C:ribonucleoprotein complex"/>
    <property type="evidence" value="ECO:0007669"/>
    <property type="project" value="UniProtKB-KW"/>
</dbReference>
<dbReference type="GO" id="GO:0005840">
    <property type="term" value="C:ribosome"/>
    <property type="evidence" value="ECO:0007669"/>
    <property type="project" value="UniProtKB-KW"/>
</dbReference>
<dbReference type="GO" id="GO:0019843">
    <property type="term" value="F:rRNA binding"/>
    <property type="evidence" value="ECO:0007669"/>
    <property type="project" value="UniProtKB-UniRule"/>
</dbReference>
<dbReference type="GO" id="GO:0003735">
    <property type="term" value="F:structural constituent of ribosome"/>
    <property type="evidence" value="ECO:0007669"/>
    <property type="project" value="InterPro"/>
</dbReference>
<dbReference type="GO" id="GO:0006412">
    <property type="term" value="P:translation"/>
    <property type="evidence" value="ECO:0007669"/>
    <property type="project" value="UniProtKB-UniRule"/>
</dbReference>
<dbReference type="FunFam" id="3.30.70.330:FF:000002">
    <property type="entry name" value="50S ribosomal protein L23, chloroplastic"/>
    <property type="match status" value="1"/>
</dbReference>
<dbReference type="Gene3D" id="3.30.70.330">
    <property type="match status" value="1"/>
</dbReference>
<dbReference type="HAMAP" id="MF_01369_B">
    <property type="entry name" value="Ribosomal_uL23_B"/>
    <property type="match status" value="1"/>
</dbReference>
<dbReference type="InterPro" id="IPR012677">
    <property type="entry name" value="Nucleotide-bd_a/b_plait_sf"/>
</dbReference>
<dbReference type="InterPro" id="IPR013025">
    <property type="entry name" value="Ribosomal_uL23-like"/>
</dbReference>
<dbReference type="InterPro" id="IPR012678">
    <property type="entry name" value="Ribosomal_uL23/eL15/eS24_sf"/>
</dbReference>
<dbReference type="InterPro" id="IPR001014">
    <property type="entry name" value="Ribosomal_uL23_CS"/>
</dbReference>
<dbReference type="PANTHER" id="PTHR11620">
    <property type="entry name" value="60S RIBOSOMAL PROTEIN L23A"/>
    <property type="match status" value="1"/>
</dbReference>
<dbReference type="Pfam" id="PF00276">
    <property type="entry name" value="Ribosomal_L23"/>
    <property type="match status" value="1"/>
</dbReference>
<dbReference type="SUPFAM" id="SSF54189">
    <property type="entry name" value="Ribosomal proteins S24e, L23 and L15e"/>
    <property type="match status" value="1"/>
</dbReference>
<dbReference type="PROSITE" id="PS00050">
    <property type="entry name" value="RIBOSOMAL_L23"/>
    <property type="match status" value="1"/>
</dbReference>
<evidence type="ECO:0000250" key="1"/>
<evidence type="ECO:0000305" key="2"/>
<gene>
    <name type="primary">rpl23-A</name>
</gene>
<gene>
    <name type="primary">rpl23-B</name>
</gene>
<proteinExistence type="inferred from homology"/>
<accession>Q6ENR9</accession>
<organism>
    <name type="scientific">Saccharum officinarum</name>
    <name type="common">Sugarcane</name>
    <dbReference type="NCBI Taxonomy" id="4547"/>
    <lineage>
        <taxon>Eukaryota</taxon>
        <taxon>Viridiplantae</taxon>
        <taxon>Streptophyta</taxon>
        <taxon>Embryophyta</taxon>
        <taxon>Tracheophyta</taxon>
        <taxon>Spermatophyta</taxon>
        <taxon>Magnoliopsida</taxon>
        <taxon>Liliopsida</taxon>
        <taxon>Poales</taxon>
        <taxon>Poaceae</taxon>
        <taxon>PACMAD clade</taxon>
        <taxon>Panicoideae</taxon>
        <taxon>Andropogonodae</taxon>
        <taxon>Andropogoneae</taxon>
        <taxon>Saccharinae</taxon>
        <taxon>Saccharum</taxon>
        <taxon>Saccharum officinarum species complex</taxon>
    </lineage>
</organism>
<keyword id="KW-0150">Chloroplast</keyword>
<keyword id="KW-0934">Plastid</keyword>
<keyword id="KW-0687">Ribonucleoprotein</keyword>
<keyword id="KW-0689">Ribosomal protein</keyword>
<keyword id="KW-0694">RNA-binding</keyword>
<keyword id="KW-0699">rRNA-binding</keyword>
<name>RK23_SACOF</name>
<comment type="function">
    <text evidence="1">Binds to 23S rRNA.</text>
</comment>
<comment type="subunit">
    <text evidence="1">Part of the 50S ribosomal subunit.</text>
</comment>
<comment type="subcellular location">
    <subcellularLocation>
        <location>Plastid</location>
        <location>Chloroplast</location>
    </subcellularLocation>
</comment>
<comment type="similarity">
    <text evidence="2">Belongs to the universal ribosomal protein uL23 family.</text>
</comment>
<protein>
    <recommendedName>
        <fullName evidence="2">Large ribosomal subunit protein uL23cz/uL23cy</fullName>
    </recommendedName>
    <alternativeName>
        <fullName>50S ribosomal protein L23, chloroplastic</fullName>
    </alternativeName>
</protein>
<sequence length="93" mass="10737">MDGIKYAVFTEKSLRLLGKNQYTFNVESGFTKTEIKHWVELFFGVKVVAVNSHRLPGKGRRMGPILGHTMHYRRMIITLQPGYSIPLLDRETN</sequence>
<geneLocation type="chloroplast"/>
<reference key="1">
    <citation type="journal article" date="2004" name="DNA Res.">
        <title>Complete nucleotide sequence of the sugarcane (Saccharum officinarum) chloroplast genome: a comparative analysis of four monocot chloroplast genomes.</title>
        <authorList>
            <person name="Asano T."/>
            <person name="Tsudzuki T."/>
            <person name="Takahashi S."/>
            <person name="Shimada H."/>
            <person name="Kadowaki K."/>
        </authorList>
    </citation>
    <scope>NUCLEOTIDE SEQUENCE [LARGE SCALE GENOMIC DNA]</scope>
</reference>
<feature type="chain" id="PRO_0000226931" description="Large ribosomal subunit protein uL23cz/uL23cy">
    <location>
        <begin position="1"/>
        <end position="93"/>
    </location>
</feature>